<dbReference type="EMBL" id="AK036528">
    <property type="protein sequence ID" value="BAC29463.1"/>
    <property type="molecule type" value="mRNA"/>
</dbReference>
<dbReference type="EMBL" id="AK160584">
    <property type="protein sequence ID" value="BAE35891.1"/>
    <property type="molecule type" value="mRNA"/>
</dbReference>
<dbReference type="EMBL" id="AK164357">
    <property type="protein sequence ID" value="BAE37757.1"/>
    <property type="molecule type" value="mRNA"/>
</dbReference>
<dbReference type="EMBL" id="AK170955">
    <property type="protein sequence ID" value="BAE42138.1"/>
    <property type="molecule type" value="mRNA"/>
</dbReference>
<dbReference type="EMBL" id="AK171198">
    <property type="protein sequence ID" value="BAE42308.1"/>
    <property type="status" value="ALT_FRAME"/>
    <property type="molecule type" value="mRNA"/>
</dbReference>
<dbReference type="EMBL" id="AK139284">
    <property type="protein sequence ID" value="BAE23943.1"/>
    <property type="molecule type" value="mRNA"/>
</dbReference>
<dbReference type="EMBL" id="BC023245">
    <property type="protein sequence ID" value="AAH23245.1"/>
    <property type="molecule type" value="mRNA"/>
</dbReference>
<dbReference type="EMBL" id="BC060709">
    <property type="protein sequence ID" value="AAH60709.1"/>
    <property type="molecule type" value="mRNA"/>
</dbReference>
<dbReference type="CCDS" id="CCDS20460.1">
    <molecule id="Q8CB96-1"/>
</dbReference>
<dbReference type="RefSeq" id="NP_835146.3">
    <molecule id="Q8CB96-1"/>
    <property type="nucleotide sequence ID" value="NM_178045.4"/>
</dbReference>
<dbReference type="BioGRID" id="229421">
    <property type="interactions" value="1"/>
</dbReference>
<dbReference type="FunCoup" id="Q8CB96">
    <property type="interactions" value="195"/>
</dbReference>
<dbReference type="STRING" id="10090.ENSMUSP00000048267"/>
<dbReference type="iPTMnet" id="Q8CB96"/>
<dbReference type="PhosphoSitePlus" id="Q8CB96"/>
<dbReference type="PaxDb" id="10090-ENSMUSP00000048267"/>
<dbReference type="PeptideAtlas" id="Q8CB96"/>
<dbReference type="ProteomicsDB" id="300236">
    <molecule id="Q8CB96-1"/>
</dbReference>
<dbReference type="ProteomicsDB" id="300237">
    <molecule id="Q8CB96-2"/>
</dbReference>
<dbReference type="ProteomicsDB" id="300238">
    <molecule id="Q8CB96-3"/>
</dbReference>
<dbReference type="Antibodypedia" id="26967">
    <property type="antibodies" value="177 antibodies from 28 providers"/>
</dbReference>
<dbReference type="DNASU" id="213391"/>
<dbReference type="Ensembl" id="ENSMUST00000035842.7">
    <molecule id="Q8CB96-1"/>
    <property type="protein sequence ID" value="ENSMUSP00000048267.5"/>
    <property type="gene ID" value="ENSMUSG00000042129.9"/>
</dbReference>
<dbReference type="Ensembl" id="ENSMUST00000203029.3">
    <molecule id="Q8CB96-2"/>
    <property type="protein sequence ID" value="ENSMUSP00000144786.2"/>
    <property type="gene ID" value="ENSMUSG00000042129.9"/>
</dbReference>
<dbReference type="GeneID" id="213391"/>
<dbReference type="KEGG" id="mmu:213391"/>
<dbReference type="UCSC" id="uc009dkm.2">
    <molecule id="Q8CB96-1"/>
    <property type="organism name" value="mouse"/>
</dbReference>
<dbReference type="UCSC" id="uc009dko.3">
    <molecule id="Q8CB96-3"/>
    <property type="organism name" value="mouse"/>
</dbReference>
<dbReference type="AGR" id="MGI:2386853"/>
<dbReference type="CTD" id="83937"/>
<dbReference type="MGI" id="MGI:2386853">
    <property type="gene designation" value="Rassf4"/>
</dbReference>
<dbReference type="VEuPathDB" id="HostDB:ENSMUSG00000042129"/>
<dbReference type="eggNOG" id="KOG4239">
    <property type="taxonomic scope" value="Eukaryota"/>
</dbReference>
<dbReference type="GeneTree" id="ENSGT00940000160176"/>
<dbReference type="HOGENOM" id="CLU_018893_1_0_1"/>
<dbReference type="InParanoid" id="Q8CB96"/>
<dbReference type="OMA" id="RMCERQT"/>
<dbReference type="OrthoDB" id="9976881at2759"/>
<dbReference type="PhylomeDB" id="Q8CB96"/>
<dbReference type="TreeFam" id="TF319243"/>
<dbReference type="BioGRID-ORCS" id="213391">
    <property type="hits" value="2 hits in 78 CRISPR screens"/>
</dbReference>
<dbReference type="ChiTaRS" id="Rassf4">
    <property type="organism name" value="mouse"/>
</dbReference>
<dbReference type="PRO" id="PR:Q8CB96"/>
<dbReference type="Proteomes" id="UP000000589">
    <property type="component" value="Chromosome 6"/>
</dbReference>
<dbReference type="RNAct" id="Q8CB96">
    <property type="molecule type" value="protein"/>
</dbReference>
<dbReference type="Bgee" id="ENSMUSG00000042129">
    <property type="expression patterns" value="Expressed in vestibular membrane of cochlear duct and 180 other cell types or tissues"/>
</dbReference>
<dbReference type="ExpressionAtlas" id="Q8CB96">
    <property type="expression patterns" value="baseline and differential"/>
</dbReference>
<dbReference type="GO" id="GO:0007165">
    <property type="term" value="P:signal transduction"/>
    <property type="evidence" value="ECO:0007669"/>
    <property type="project" value="InterPro"/>
</dbReference>
<dbReference type="CDD" id="cd17222">
    <property type="entry name" value="RA_RASSF4"/>
    <property type="match status" value="1"/>
</dbReference>
<dbReference type="CDD" id="cd21894">
    <property type="entry name" value="SARAH_RASSF4"/>
    <property type="match status" value="1"/>
</dbReference>
<dbReference type="Gene3D" id="3.10.20.90">
    <property type="entry name" value="Phosphatidylinositol 3-kinase Catalytic Subunit, Chain A, domain 1"/>
    <property type="match status" value="1"/>
</dbReference>
<dbReference type="InterPro" id="IPR000159">
    <property type="entry name" value="RA_dom"/>
</dbReference>
<dbReference type="InterPro" id="IPR033614">
    <property type="entry name" value="RASSF1-6"/>
</dbReference>
<dbReference type="InterPro" id="IPR033622">
    <property type="entry name" value="RASSF4_RA"/>
</dbReference>
<dbReference type="InterPro" id="IPR011524">
    <property type="entry name" value="SARAH_dom"/>
</dbReference>
<dbReference type="InterPro" id="IPR029071">
    <property type="entry name" value="Ubiquitin-like_domsf"/>
</dbReference>
<dbReference type="PANTHER" id="PTHR22738:SF4">
    <property type="entry name" value="RAS ASSOCIATION DOMAIN-CONTAINING PROTEIN 4"/>
    <property type="match status" value="1"/>
</dbReference>
<dbReference type="PANTHER" id="PTHR22738">
    <property type="entry name" value="RASSF"/>
    <property type="match status" value="1"/>
</dbReference>
<dbReference type="Pfam" id="PF16517">
    <property type="entry name" value="Nore1-SARAH"/>
    <property type="match status" value="1"/>
</dbReference>
<dbReference type="Pfam" id="PF00788">
    <property type="entry name" value="RA"/>
    <property type="match status" value="1"/>
</dbReference>
<dbReference type="SMART" id="SM00314">
    <property type="entry name" value="RA"/>
    <property type="match status" value="1"/>
</dbReference>
<dbReference type="SUPFAM" id="SSF54236">
    <property type="entry name" value="Ubiquitin-like"/>
    <property type="match status" value="1"/>
</dbReference>
<dbReference type="PROSITE" id="PS50200">
    <property type="entry name" value="RA"/>
    <property type="match status" value="1"/>
</dbReference>
<dbReference type="PROSITE" id="PS50951">
    <property type="entry name" value="SARAH"/>
    <property type="match status" value="1"/>
</dbReference>
<keyword id="KW-0025">Alternative splicing</keyword>
<keyword id="KW-0131">Cell cycle</keyword>
<keyword id="KW-0597">Phosphoprotein</keyword>
<keyword id="KW-1185">Reference proteome</keyword>
<keyword id="KW-0043">Tumor suppressor</keyword>
<gene>
    <name type="primary">Rassf4</name>
</gene>
<feature type="chain" id="PRO_0000240399" description="Ras association domain-containing protein 4">
    <location>
        <begin position="1"/>
        <end position="322"/>
    </location>
</feature>
<feature type="domain" description="Ras-associating" evidence="2">
    <location>
        <begin position="175"/>
        <end position="264"/>
    </location>
</feature>
<feature type="domain" description="SARAH" evidence="3">
    <location>
        <begin position="271"/>
        <end position="318"/>
    </location>
</feature>
<feature type="region of interest" description="Disordered" evidence="4">
    <location>
        <begin position="96"/>
        <end position="161"/>
    </location>
</feature>
<feature type="modified residue" description="Phosphoserine" evidence="8">
    <location>
        <position position="142"/>
    </location>
</feature>
<feature type="splice variant" id="VSP_019360" description="In isoform 3." evidence="5">
    <original>TSVFTPAYGSVTNVRVNSTMTTQQVLTLLLNKFRVEDGPSEFALYTVHESGEQTKLKDCEYPLISRILHGPCEKIVKIFLMEADLSEEVPHDVAQYIK</original>
    <variation>VKSPSALSWALKLRVQELFPSTEERAPNIQHSSHSSIR</variation>
    <location>
        <begin position="179"/>
        <end position="276"/>
    </location>
</feature>
<feature type="splice variant" id="VSP_019361" description="In isoform 3." evidence="5">
    <location>
        <begin position="277"/>
        <end position="322"/>
    </location>
</feature>
<feature type="splice variant" id="VSP_019362" description="In isoform 2." evidence="6">
    <location>
        <begin position="304"/>
        <end position="322"/>
    </location>
</feature>
<feature type="sequence conflict" description="In Ref. 1; BAE42308." evidence="7" ref="1">
    <original>K</original>
    <variation>E</variation>
    <location>
        <position position="153"/>
    </location>
</feature>
<feature type="sequence conflict" description="In Ref. 1; BAE37757." evidence="7" ref="1">
    <original>E</original>
    <variation>G</variation>
    <location>
        <position position="291"/>
    </location>
</feature>
<feature type="sequence conflict" description="In Ref. 2; AAH60709." evidence="7" ref="2">
    <original>R</original>
    <variation>I</variation>
    <location>
        <position position="295"/>
    </location>
</feature>
<sequence>MKEACSSSSHVPVSDSKYILKSELLSLLKTYNCYHEGRSFQLRHREEEGTLIIEGLLNIAWGLRRPIRLQMQDDRERVHLPSATWVPERLSYLQKEASPQDSKVPTEEPGTQPANKAEVSGDSSGALEGEEEEVPQLMRTKSDASCIIQRRSKSRAPSEAQKIRRHRFSINGHFYNHKTSVFTPAYGSVTNVRVNSTMTTQQVLTLLLNKFRVEDGPSEFALYTVHESGEQTKLKDCEYPLISRILHGPCEKIVKIFLMEADLSEEVPHDVAQYIKFEMPVLDSFVEKLKEEEEREIIKLTMKFQALRLTMLQRLEQLVEAK</sequence>
<protein>
    <recommendedName>
        <fullName>Ras association domain-containing protein 4</fullName>
    </recommendedName>
</protein>
<evidence type="ECO:0000250" key="1"/>
<evidence type="ECO:0000255" key="2">
    <source>
        <dbReference type="PROSITE-ProRule" id="PRU00166"/>
    </source>
</evidence>
<evidence type="ECO:0000255" key="3">
    <source>
        <dbReference type="PROSITE-ProRule" id="PRU00310"/>
    </source>
</evidence>
<evidence type="ECO:0000256" key="4">
    <source>
        <dbReference type="SAM" id="MobiDB-lite"/>
    </source>
</evidence>
<evidence type="ECO:0000303" key="5">
    <source>
    </source>
</evidence>
<evidence type="ECO:0000303" key="6">
    <source>
    </source>
</evidence>
<evidence type="ECO:0000305" key="7"/>
<evidence type="ECO:0007744" key="8">
    <source>
    </source>
</evidence>
<name>RASF4_MOUSE</name>
<accession>Q8CB96</accession>
<accession>Q3TBK1</accession>
<accession>Q3TPH9</accession>
<accession>Q3TUT0</accession>
<accession>Q6P9L7</accession>
<accession>Q8CIM6</accession>
<comment type="function">
    <text>Potential tumor suppressor. May act as a KRAS effector protein. May promote apoptosis and cell cycle arrest.</text>
</comment>
<comment type="subunit">
    <text evidence="1">Interacts directly with activated KRAS in a GTP-dependent manner.</text>
</comment>
<comment type="alternative products">
    <event type="alternative splicing"/>
    <isoform>
        <id>Q8CB96-1</id>
        <name>1</name>
        <sequence type="displayed"/>
    </isoform>
    <isoform>
        <id>Q8CB96-2</id>
        <name>2</name>
        <sequence type="described" ref="VSP_019362"/>
    </isoform>
    <isoform>
        <id>Q8CB96-3</id>
        <name>3</name>
        <sequence type="described" ref="VSP_019360 VSP_019361"/>
    </isoform>
</comment>
<comment type="sequence caution" evidence="7">
    <conflict type="frameshift">
        <sequence resource="EMBL-CDS" id="BAE42308"/>
    </conflict>
</comment>
<reference key="1">
    <citation type="journal article" date="2005" name="Science">
        <title>The transcriptional landscape of the mammalian genome.</title>
        <authorList>
            <person name="Carninci P."/>
            <person name="Kasukawa T."/>
            <person name="Katayama S."/>
            <person name="Gough J."/>
            <person name="Frith M.C."/>
            <person name="Maeda N."/>
            <person name="Oyama R."/>
            <person name="Ravasi T."/>
            <person name="Lenhard B."/>
            <person name="Wells C."/>
            <person name="Kodzius R."/>
            <person name="Shimokawa K."/>
            <person name="Bajic V.B."/>
            <person name="Brenner S.E."/>
            <person name="Batalov S."/>
            <person name="Forrest A.R."/>
            <person name="Zavolan M."/>
            <person name="Davis M.J."/>
            <person name="Wilming L.G."/>
            <person name="Aidinis V."/>
            <person name="Allen J.E."/>
            <person name="Ambesi-Impiombato A."/>
            <person name="Apweiler R."/>
            <person name="Aturaliya R.N."/>
            <person name="Bailey T.L."/>
            <person name="Bansal M."/>
            <person name="Baxter L."/>
            <person name="Beisel K.W."/>
            <person name="Bersano T."/>
            <person name="Bono H."/>
            <person name="Chalk A.M."/>
            <person name="Chiu K.P."/>
            <person name="Choudhary V."/>
            <person name="Christoffels A."/>
            <person name="Clutterbuck D.R."/>
            <person name="Crowe M.L."/>
            <person name="Dalla E."/>
            <person name="Dalrymple B.P."/>
            <person name="de Bono B."/>
            <person name="Della Gatta G."/>
            <person name="di Bernardo D."/>
            <person name="Down T."/>
            <person name="Engstrom P."/>
            <person name="Fagiolini M."/>
            <person name="Faulkner G."/>
            <person name="Fletcher C.F."/>
            <person name="Fukushima T."/>
            <person name="Furuno M."/>
            <person name="Futaki S."/>
            <person name="Gariboldi M."/>
            <person name="Georgii-Hemming P."/>
            <person name="Gingeras T.R."/>
            <person name="Gojobori T."/>
            <person name="Green R.E."/>
            <person name="Gustincich S."/>
            <person name="Harbers M."/>
            <person name="Hayashi Y."/>
            <person name="Hensch T.K."/>
            <person name="Hirokawa N."/>
            <person name="Hill D."/>
            <person name="Huminiecki L."/>
            <person name="Iacono M."/>
            <person name="Ikeo K."/>
            <person name="Iwama A."/>
            <person name="Ishikawa T."/>
            <person name="Jakt M."/>
            <person name="Kanapin A."/>
            <person name="Katoh M."/>
            <person name="Kawasawa Y."/>
            <person name="Kelso J."/>
            <person name="Kitamura H."/>
            <person name="Kitano H."/>
            <person name="Kollias G."/>
            <person name="Krishnan S.P."/>
            <person name="Kruger A."/>
            <person name="Kummerfeld S.K."/>
            <person name="Kurochkin I.V."/>
            <person name="Lareau L.F."/>
            <person name="Lazarevic D."/>
            <person name="Lipovich L."/>
            <person name="Liu J."/>
            <person name="Liuni S."/>
            <person name="McWilliam S."/>
            <person name="Madan Babu M."/>
            <person name="Madera M."/>
            <person name="Marchionni L."/>
            <person name="Matsuda H."/>
            <person name="Matsuzawa S."/>
            <person name="Miki H."/>
            <person name="Mignone F."/>
            <person name="Miyake S."/>
            <person name="Morris K."/>
            <person name="Mottagui-Tabar S."/>
            <person name="Mulder N."/>
            <person name="Nakano N."/>
            <person name="Nakauchi H."/>
            <person name="Ng P."/>
            <person name="Nilsson R."/>
            <person name="Nishiguchi S."/>
            <person name="Nishikawa S."/>
            <person name="Nori F."/>
            <person name="Ohara O."/>
            <person name="Okazaki Y."/>
            <person name="Orlando V."/>
            <person name="Pang K.C."/>
            <person name="Pavan W.J."/>
            <person name="Pavesi G."/>
            <person name="Pesole G."/>
            <person name="Petrovsky N."/>
            <person name="Piazza S."/>
            <person name="Reed J."/>
            <person name="Reid J.F."/>
            <person name="Ring B.Z."/>
            <person name="Ringwald M."/>
            <person name="Rost B."/>
            <person name="Ruan Y."/>
            <person name="Salzberg S.L."/>
            <person name="Sandelin A."/>
            <person name="Schneider C."/>
            <person name="Schoenbach C."/>
            <person name="Sekiguchi K."/>
            <person name="Semple C.A."/>
            <person name="Seno S."/>
            <person name="Sessa L."/>
            <person name="Sheng Y."/>
            <person name="Shibata Y."/>
            <person name="Shimada H."/>
            <person name="Shimada K."/>
            <person name="Silva D."/>
            <person name="Sinclair B."/>
            <person name="Sperling S."/>
            <person name="Stupka E."/>
            <person name="Sugiura K."/>
            <person name="Sultana R."/>
            <person name="Takenaka Y."/>
            <person name="Taki K."/>
            <person name="Tammoja K."/>
            <person name="Tan S.L."/>
            <person name="Tang S."/>
            <person name="Taylor M.S."/>
            <person name="Tegner J."/>
            <person name="Teichmann S.A."/>
            <person name="Ueda H.R."/>
            <person name="van Nimwegen E."/>
            <person name="Verardo R."/>
            <person name="Wei C.L."/>
            <person name="Yagi K."/>
            <person name="Yamanishi H."/>
            <person name="Zabarovsky E."/>
            <person name="Zhu S."/>
            <person name="Zimmer A."/>
            <person name="Hide W."/>
            <person name="Bult C."/>
            <person name="Grimmond S.M."/>
            <person name="Teasdale R.D."/>
            <person name="Liu E.T."/>
            <person name="Brusic V."/>
            <person name="Quackenbush J."/>
            <person name="Wahlestedt C."/>
            <person name="Mattick J.S."/>
            <person name="Hume D.A."/>
            <person name="Kai C."/>
            <person name="Sasaki D."/>
            <person name="Tomaru Y."/>
            <person name="Fukuda S."/>
            <person name="Kanamori-Katayama M."/>
            <person name="Suzuki M."/>
            <person name="Aoki J."/>
            <person name="Arakawa T."/>
            <person name="Iida J."/>
            <person name="Imamura K."/>
            <person name="Itoh M."/>
            <person name="Kato T."/>
            <person name="Kawaji H."/>
            <person name="Kawagashira N."/>
            <person name="Kawashima T."/>
            <person name="Kojima M."/>
            <person name="Kondo S."/>
            <person name="Konno H."/>
            <person name="Nakano K."/>
            <person name="Ninomiya N."/>
            <person name="Nishio T."/>
            <person name="Okada M."/>
            <person name="Plessy C."/>
            <person name="Shibata K."/>
            <person name="Shiraki T."/>
            <person name="Suzuki S."/>
            <person name="Tagami M."/>
            <person name="Waki K."/>
            <person name="Watahiki A."/>
            <person name="Okamura-Oho Y."/>
            <person name="Suzuki H."/>
            <person name="Kawai J."/>
            <person name="Hayashizaki Y."/>
        </authorList>
    </citation>
    <scope>NUCLEOTIDE SEQUENCE [LARGE SCALE MRNA] (ISOFORMS 1 AND 2)</scope>
    <source>
        <strain>C57BL/6J</strain>
        <strain>NOD</strain>
        <tissue>Bone</tissue>
        <tissue>Cerebellum</tissue>
        <tissue>Spinal ganglion</tissue>
    </source>
</reference>
<reference key="2">
    <citation type="journal article" date="2004" name="Genome Res.">
        <title>The status, quality, and expansion of the NIH full-length cDNA project: the Mammalian Gene Collection (MGC).</title>
        <authorList>
            <consortium name="The MGC Project Team"/>
        </authorList>
    </citation>
    <scope>NUCLEOTIDE SEQUENCE [LARGE SCALE MRNA] (ISOFORMS 1 AND 3)</scope>
    <source>
        <strain>C57BL/6J</strain>
        <strain>FVB/N</strain>
        <tissue>Brain</tissue>
        <tissue>Mammary tumor</tissue>
    </source>
</reference>
<reference key="3">
    <citation type="journal article" date="2010" name="Cell">
        <title>A tissue-specific atlas of mouse protein phosphorylation and expression.</title>
        <authorList>
            <person name="Huttlin E.L."/>
            <person name="Jedrychowski M.P."/>
            <person name="Elias J.E."/>
            <person name="Goswami T."/>
            <person name="Rad R."/>
            <person name="Beausoleil S.A."/>
            <person name="Villen J."/>
            <person name="Haas W."/>
            <person name="Sowa M.E."/>
            <person name="Gygi S.P."/>
        </authorList>
    </citation>
    <scope>PHOSPHORYLATION [LARGE SCALE ANALYSIS] AT SER-142</scope>
    <scope>IDENTIFICATION BY MASS SPECTROMETRY [LARGE SCALE ANALYSIS]</scope>
    <source>
        <tissue>Spleen</tissue>
    </source>
</reference>
<organism>
    <name type="scientific">Mus musculus</name>
    <name type="common">Mouse</name>
    <dbReference type="NCBI Taxonomy" id="10090"/>
    <lineage>
        <taxon>Eukaryota</taxon>
        <taxon>Metazoa</taxon>
        <taxon>Chordata</taxon>
        <taxon>Craniata</taxon>
        <taxon>Vertebrata</taxon>
        <taxon>Euteleostomi</taxon>
        <taxon>Mammalia</taxon>
        <taxon>Eutheria</taxon>
        <taxon>Euarchontoglires</taxon>
        <taxon>Glires</taxon>
        <taxon>Rodentia</taxon>
        <taxon>Myomorpha</taxon>
        <taxon>Muroidea</taxon>
        <taxon>Muridae</taxon>
        <taxon>Murinae</taxon>
        <taxon>Mus</taxon>
        <taxon>Mus</taxon>
    </lineage>
</organism>
<proteinExistence type="evidence at protein level"/>